<gene>
    <name type="ORF">SPAPB2B4.07</name>
</gene>
<dbReference type="EMBL" id="CU329670">
    <property type="protein sequence ID" value="CAC21473.1"/>
    <property type="molecule type" value="Genomic_DNA"/>
</dbReference>
<dbReference type="RefSeq" id="NP_593893.1">
    <property type="nucleotide sequence ID" value="NM_001019323.2"/>
</dbReference>
<dbReference type="SMR" id="Q9HDW4"/>
<dbReference type="FunCoup" id="Q9HDW4">
    <property type="interactions" value="70"/>
</dbReference>
<dbReference type="iPTMnet" id="Q9HDW4"/>
<dbReference type="PaxDb" id="4896-SPAPB2B4.07.1"/>
<dbReference type="EnsemblFungi" id="SPAPB2B4.07.1">
    <property type="protein sequence ID" value="SPAPB2B4.07.1:pep"/>
    <property type="gene ID" value="SPAPB2B4.07"/>
</dbReference>
<dbReference type="KEGG" id="spo:2543223"/>
<dbReference type="PomBase" id="SPAPB2B4.07"/>
<dbReference type="VEuPathDB" id="FungiDB:SPAPB2B4.07"/>
<dbReference type="eggNOG" id="KOG0013">
    <property type="taxonomic scope" value="Eukaryota"/>
</dbReference>
<dbReference type="HOGENOM" id="CLU_1161723_0_0_1"/>
<dbReference type="InParanoid" id="Q9HDW4"/>
<dbReference type="OMA" id="GCMGRYL"/>
<dbReference type="PhylomeDB" id="Q9HDW4"/>
<dbReference type="PRO" id="PR:Q9HDW4"/>
<dbReference type="Proteomes" id="UP000002485">
    <property type="component" value="Chromosome I"/>
</dbReference>
<dbReference type="Gene3D" id="1.20.225.20">
    <property type="entry name" value="Ub domain-containing protein, DC-UbP/UBTD2, N-terminal domain"/>
    <property type="match status" value="1"/>
</dbReference>
<dbReference type="InterPro" id="IPR032752">
    <property type="entry name" value="DC-UbP/UBTD2_N"/>
</dbReference>
<dbReference type="InterPro" id="IPR038169">
    <property type="entry name" value="DC-UbP/UBTD2_N_sf"/>
</dbReference>
<dbReference type="InterPro" id="IPR029071">
    <property type="entry name" value="Ubiquitin-like_domsf"/>
</dbReference>
<dbReference type="InterPro" id="IPR039869">
    <property type="entry name" value="UBTD1/2"/>
</dbReference>
<dbReference type="PANTHER" id="PTHR13609">
    <property type="entry name" value="UBIQUITIN DOMAIN CONTAINING 1 PROTEIN-RELATED"/>
    <property type="match status" value="1"/>
</dbReference>
<dbReference type="Pfam" id="PF16455">
    <property type="entry name" value="UBD"/>
    <property type="match status" value="1"/>
</dbReference>
<dbReference type="SUPFAM" id="SSF54236">
    <property type="entry name" value="Ubiquitin-like"/>
    <property type="match status" value="1"/>
</dbReference>
<evidence type="ECO:0000256" key="1">
    <source>
        <dbReference type="SAM" id="MobiDB-lite"/>
    </source>
</evidence>
<evidence type="ECO:0000269" key="2">
    <source>
    </source>
</evidence>
<accession>Q9HDW4</accession>
<organism>
    <name type="scientific">Schizosaccharomyces pombe (strain 972 / ATCC 24843)</name>
    <name type="common">Fission yeast</name>
    <dbReference type="NCBI Taxonomy" id="284812"/>
    <lineage>
        <taxon>Eukaryota</taxon>
        <taxon>Fungi</taxon>
        <taxon>Dikarya</taxon>
        <taxon>Ascomycota</taxon>
        <taxon>Taphrinomycotina</taxon>
        <taxon>Schizosaccharomycetes</taxon>
        <taxon>Schizosaccharomycetales</taxon>
        <taxon>Schizosaccharomycetaceae</taxon>
        <taxon>Schizosaccharomyces</taxon>
    </lineage>
</organism>
<name>YFW7_SCHPO</name>
<keyword id="KW-0597">Phosphoprotein</keyword>
<keyword id="KW-1185">Reference proteome</keyword>
<proteinExistence type="evidence at protein level"/>
<reference key="1">
    <citation type="journal article" date="2002" name="Nature">
        <title>The genome sequence of Schizosaccharomyces pombe.</title>
        <authorList>
            <person name="Wood V."/>
            <person name="Gwilliam R."/>
            <person name="Rajandream M.A."/>
            <person name="Lyne M.H."/>
            <person name="Lyne R."/>
            <person name="Stewart A."/>
            <person name="Sgouros J.G."/>
            <person name="Peat N."/>
            <person name="Hayles J."/>
            <person name="Baker S.G."/>
            <person name="Basham D."/>
            <person name="Bowman S."/>
            <person name="Brooks K."/>
            <person name="Brown D."/>
            <person name="Brown S."/>
            <person name="Chillingworth T."/>
            <person name="Churcher C.M."/>
            <person name="Collins M."/>
            <person name="Connor R."/>
            <person name="Cronin A."/>
            <person name="Davis P."/>
            <person name="Feltwell T."/>
            <person name="Fraser A."/>
            <person name="Gentles S."/>
            <person name="Goble A."/>
            <person name="Hamlin N."/>
            <person name="Harris D.E."/>
            <person name="Hidalgo J."/>
            <person name="Hodgson G."/>
            <person name="Holroyd S."/>
            <person name="Hornsby T."/>
            <person name="Howarth S."/>
            <person name="Huckle E.J."/>
            <person name="Hunt S."/>
            <person name="Jagels K."/>
            <person name="James K.D."/>
            <person name="Jones L."/>
            <person name="Jones M."/>
            <person name="Leather S."/>
            <person name="McDonald S."/>
            <person name="McLean J."/>
            <person name="Mooney P."/>
            <person name="Moule S."/>
            <person name="Mungall K.L."/>
            <person name="Murphy L.D."/>
            <person name="Niblett D."/>
            <person name="Odell C."/>
            <person name="Oliver K."/>
            <person name="O'Neil S."/>
            <person name="Pearson D."/>
            <person name="Quail M.A."/>
            <person name="Rabbinowitsch E."/>
            <person name="Rutherford K.M."/>
            <person name="Rutter S."/>
            <person name="Saunders D."/>
            <person name="Seeger K."/>
            <person name="Sharp S."/>
            <person name="Skelton J."/>
            <person name="Simmonds M.N."/>
            <person name="Squares R."/>
            <person name="Squares S."/>
            <person name="Stevens K."/>
            <person name="Taylor K."/>
            <person name="Taylor R.G."/>
            <person name="Tivey A."/>
            <person name="Walsh S.V."/>
            <person name="Warren T."/>
            <person name="Whitehead S."/>
            <person name="Woodward J.R."/>
            <person name="Volckaert G."/>
            <person name="Aert R."/>
            <person name="Robben J."/>
            <person name="Grymonprez B."/>
            <person name="Weltjens I."/>
            <person name="Vanstreels E."/>
            <person name="Rieger M."/>
            <person name="Schaefer M."/>
            <person name="Mueller-Auer S."/>
            <person name="Gabel C."/>
            <person name="Fuchs M."/>
            <person name="Duesterhoeft A."/>
            <person name="Fritzc C."/>
            <person name="Holzer E."/>
            <person name="Moestl D."/>
            <person name="Hilbert H."/>
            <person name="Borzym K."/>
            <person name="Langer I."/>
            <person name="Beck A."/>
            <person name="Lehrach H."/>
            <person name="Reinhardt R."/>
            <person name="Pohl T.M."/>
            <person name="Eger P."/>
            <person name="Zimmermann W."/>
            <person name="Wedler H."/>
            <person name="Wambutt R."/>
            <person name="Purnelle B."/>
            <person name="Goffeau A."/>
            <person name="Cadieu E."/>
            <person name="Dreano S."/>
            <person name="Gloux S."/>
            <person name="Lelaure V."/>
            <person name="Mottier S."/>
            <person name="Galibert F."/>
            <person name="Aves S.J."/>
            <person name="Xiang Z."/>
            <person name="Hunt C."/>
            <person name="Moore K."/>
            <person name="Hurst S.M."/>
            <person name="Lucas M."/>
            <person name="Rochet M."/>
            <person name="Gaillardin C."/>
            <person name="Tallada V.A."/>
            <person name="Garzon A."/>
            <person name="Thode G."/>
            <person name="Daga R.R."/>
            <person name="Cruzado L."/>
            <person name="Jimenez J."/>
            <person name="Sanchez M."/>
            <person name="del Rey F."/>
            <person name="Benito J."/>
            <person name="Dominguez A."/>
            <person name="Revuelta J.L."/>
            <person name="Moreno S."/>
            <person name="Armstrong J."/>
            <person name="Forsburg S.L."/>
            <person name="Cerutti L."/>
            <person name="Lowe T."/>
            <person name="McCombie W.R."/>
            <person name="Paulsen I."/>
            <person name="Potashkin J."/>
            <person name="Shpakovski G.V."/>
            <person name="Ussery D."/>
            <person name="Barrell B.G."/>
            <person name="Nurse P."/>
        </authorList>
    </citation>
    <scope>NUCLEOTIDE SEQUENCE [LARGE SCALE GENOMIC DNA]</scope>
    <source>
        <strain>972 / ATCC 24843</strain>
    </source>
</reference>
<reference key="2">
    <citation type="journal article" date="2008" name="J. Proteome Res.">
        <title>Phosphoproteome analysis of fission yeast.</title>
        <authorList>
            <person name="Wilson-Grady J.T."/>
            <person name="Villen J."/>
            <person name="Gygi S.P."/>
        </authorList>
    </citation>
    <scope>PHOSPHORYLATION [LARGE SCALE ANALYSIS] AT SER-160</scope>
    <scope>IDENTIFICATION BY MASS SPECTROMETRY</scope>
</reference>
<feature type="chain" id="PRO_0000116750" description="Uncharacterized protein PB2B4.07">
    <location>
        <begin position="1"/>
        <end position="239"/>
    </location>
</feature>
<feature type="region of interest" description="Disordered" evidence="1">
    <location>
        <begin position="129"/>
        <end position="155"/>
    </location>
</feature>
<feature type="modified residue" description="Phosphoserine" evidence="2">
    <location>
        <position position="160"/>
    </location>
</feature>
<sequence>MGQCLSGNQVAGVANNGGEQPSGSNILRLPKLYTPNPLLTKEEVEVRRNEFWETCWAYGGSKEIWDVLHKVVTLLYEGNAEAATEMALAADLTIPENDISKGVYDSKGTFYEIPKIVARIPRAFAERKDSLDDEDDNMISSNDPTKSPEEHDTTTKSIASLKDAELDSSLETVLIRYSKDDKDYSIQINPNLPFSHAKSQLEEVGLENVQRFFFLGRVLQFKKSLSQQGWTSGMIIQAM</sequence>
<protein>
    <recommendedName>
        <fullName>Uncharacterized protein PB2B4.07</fullName>
    </recommendedName>
</protein>